<organism>
    <name type="scientific">Homo sapiens</name>
    <name type="common">Human</name>
    <dbReference type="NCBI Taxonomy" id="9606"/>
    <lineage>
        <taxon>Eukaryota</taxon>
        <taxon>Metazoa</taxon>
        <taxon>Chordata</taxon>
        <taxon>Craniata</taxon>
        <taxon>Vertebrata</taxon>
        <taxon>Euteleostomi</taxon>
        <taxon>Mammalia</taxon>
        <taxon>Eutheria</taxon>
        <taxon>Euarchontoglires</taxon>
        <taxon>Primates</taxon>
        <taxon>Haplorrhini</taxon>
        <taxon>Catarrhini</taxon>
        <taxon>Hominidae</taxon>
        <taxon>Homo</taxon>
    </lineage>
</organism>
<gene>
    <name type="primary">OR1I1</name>
</gene>
<accession>O60431</accession>
<accession>B2RU23</accession>
<accession>Q96R92</accession>
<feature type="chain" id="PRO_0000150437" description="Olfactory receptor 1I1">
    <location>
        <begin position="1"/>
        <end position="355"/>
    </location>
</feature>
<feature type="topological domain" description="Extracellular" evidence="1">
    <location>
        <begin position="1"/>
        <end position="25"/>
    </location>
</feature>
<feature type="transmembrane region" description="Helical; Name=1" evidence="1">
    <location>
        <begin position="26"/>
        <end position="49"/>
    </location>
</feature>
<feature type="topological domain" description="Cytoplasmic" evidence="1">
    <location>
        <begin position="50"/>
        <end position="57"/>
    </location>
</feature>
<feature type="transmembrane region" description="Helical; Name=2" evidence="1">
    <location>
        <begin position="58"/>
        <end position="79"/>
    </location>
</feature>
<feature type="topological domain" description="Extracellular" evidence="1">
    <location>
        <begin position="80"/>
        <end position="100"/>
    </location>
</feature>
<feature type="transmembrane region" description="Helical; Name=3" evidence="1">
    <location>
        <begin position="101"/>
        <end position="120"/>
    </location>
</feature>
<feature type="topological domain" description="Cytoplasmic" evidence="1">
    <location>
        <begin position="121"/>
        <end position="139"/>
    </location>
</feature>
<feature type="transmembrane region" description="Helical; Name=4" evidence="1">
    <location>
        <begin position="140"/>
        <end position="158"/>
    </location>
</feature>
<feature type="topological domain" description="Extracellular" evidence="1">
    <location>
        <begin position="159"/>
        <end position="195"/>
    </location>
</feature>
<feature type="transmembrane region" description="Helical; Name=5" evidence="1">
    <location>
        <begin position="196"/>
        <end position="219"/>
    </location>
</feature>
<feature type="topological domain" description="Cytoplasmic" evidence="1">
    <location>
        <begin position="220"/>
        <end position="236"/>
    </location>
</feature>
<feature type="transmembrane region" description="Helical; Name=6" evidence="1">
    <location>
        <begin position="237"/>
        <end position="259"/>
    </location>
</feature>
<feature type="topological domain" description="Extracellular" evidence="1">
    <location>
        <begin position="260"/>
        <end position="272"/>
    </location>
</feature>
<feature type="transmembrane region" description="Helical; Name=7" evidence="1">
    <location>
        <begin position="273"/>
        <end position="292"/>
    </location>
</feature>
<feature type="topological domain" description="Cytoplasmic" evidence="1">
    <location>
        <begin position="293"/>
        <end position="355"/>
    </location>
</feature>
<feature type="sequence variant" id="VAR_062009" description="In dbSNP:rs59166286.">
    <original>I</original>
    <variation>F</variation>
    <location>
        <position position="50"/>
    </location>
</feature>
<feature type="sequence variant" id="VAR_034164" description="In dbSNP:rs8104843.">
    <original>P</original>
    <variation>R</variation>
    <location>
        <position position="139"/>
    </location>
</feature>
<feature type="sequence variant" id="VAR_080450" description="In dbSNP:rs76524797." evidence="3">
    <original>M</original>
    <variation>L</variation>
    <location>
        <position position="163"/>
    </location>
</feature>
<feature type="sequence variant" id="VAR_034165" description="In dbSNP:rs8108721.">
    <original>F</original>
    <variation>L</variation>
    <location>
        <position position="211"/>
    </location>
</feature>
<feature type="sequence variant" id="VAR_034166" description="In dbSNP:rs8105737.">
    <original>Y</original>
    <variation>S</variation>
    <location>
        <position position="252"/>
    </location>
</feature>
<feature type="sequence variant" id="VAR_080451" description="In dbSNP:rs75323205." evidence="3">
    <original>I</original>
    <variation>F</variation>
    <location>
        <position position="282"/>
    </location>
</feature>
<feature type="sequence variant" id="VAR_034167" description="In dbSNP:rs16980312.">
    <original>I</original>
    <variation>T</variation>
    <location>
        <position position="292"/>
    </location>
</feature>
<reference key="1">
    <citation type="journal article" date="2004" name="Nature">
        <title>The DNA sequence and biology of human chromosome 19.</title>
        <authorList>
            <person name="Grimwood J."/>
            <person name="Gordon L.A."/>
            <person name="Olsen A.S."/>
            <person name="Terry A."/>
            <person name="Schmutz J."/>
            <person name="Lamerdin J.E."/>
            <person name="Hellsten U."/>
            <person name="Goodstein D."/>
            <person name="Couronne O."/>
            <person name="Tran-Gyamfi M."/>
            <person name="Aerts A."/>
            <person name="Altherr M."/>
            <person name="Ashworth L."/>
            <person name="Bajorek E."/>
            <person name="Black S."/>
            <person name="Branscomb E."/>
            <person name="Caenepeel S."/>
            <person name="Carrano A.V."/>
            <person name="Caoile C."/>
            <person name="Chan Y.M."/>
            <person name="Christensen M."/>
            <person name="Cleland C.A."/>
            <person name="Copeland A."/>
            <person name="Dalin E."/>
            <person name="Dehal P."/>
            <person name="Denys M."/>
            <person name="Detter J.C."/>
            <person name="Escobar J."/>
            <person name="Flowers D."/>
            <person name="Fotopulos D."/>
            <person name="Garcia C."/>
            <person name="Georgescu A.M."/>
            <person name="Glavina T."/>
            <person name="Gomez M."/>
            <person name="Gonzales E."/>
            <person name="Groza M."/>
            <person name="Hammon N."/>
            <person name="Hawkins T."/>
            <person name="Haydu L."/>
            <person name="Ho I."/>
            <person name="Huang W."/>
            <person name="Israni S."/>
            <person name="Jett J."/>
            <person name="Kadner K."/>
            <person name="Kimball H."/>
            <person name="Kobayashi A."/>
            <person name="Larionov V."/>
            <person name="Leem S.-H."/>
            <person name="Lopez F."/>
            <person name="Lou Y."/>
            <person name="Lowry S."/>
            <person name="Malfatti S."/>
            <person name="Martinez D."/>
            <person name="McCready P.M."/>
            <person name="Medina C."/>
            <person name="Morgan J."/>
            <person name="Nelson K."/>
            <person name="Nolan M."/>
            <person name="Ovcharenko I."/>
            <person name="Pitluck S."/>
            <person name="Pollard M."/>
            <person name="Popkie A.P."/>
            <person name="Predki P."/>
            <person name="Quan G."/>
            <person name="Ramirez L."/>
            <person name="Rash S."/>
            <person name="Retterer J."/>
            <person name="Rodriguez A."/>
            <person name="Rogers S."/>
            <person name="Salamov A."/>
            <person name="Salazar A."/>
            <person name="She X."/>
            <person name="Smith D."/>
            <person name="Slezak T."/>
            <person name="Solovyev V."/>
            <person name="Thayer N."/>
            <person name="Tice H."/>
            <person name="Tsai M."/>
            <person name="Ustaszewska A."/>
            <person name="Vo N."/>
            <person name="Wagner M."/>
            <person name="Wheeler J."/>
            <person name="Wu K."/>
            <person name="Xie G."/>
            <person name="Yang J."/>
            <person name="Dubchak I."/>
            <person name="Furey T.S."/>
            <person name="DeJong P."/>
            <person name="Dickson M."/>
            <person name="Gordon D."/>
            <person name="Eichler E.E."/>
            <person name="Pennacchio L.A."/>
            <person name="Richardson P."/>
            <person name="Stubbs L."/>
            <person name="Rokhsar D.S."/>
            <person name="Myers R.M."/>
            <person name="Rubin E.M."/>
            <person name="Lucas S.M."/>
        </authorList>
    </citation>
    <scope>NUCLEOTIDE SEQUENCE [LARGE SCALE GENOMIC DNA]</scope>
</reference>
<reference key="2">
    <citation type="journal article" date="2004" name="Genome Res.">
        <title>The status, quality, and expansion of the NIH full-length cDNA project: the Mammalian Gene Collection (MGC).</title>
        <authorList>
            <consortium name="The MGC Project Team"/>
        </authorList>
    </citation>
    <scope>NUCLEOTIDE SEQUENCE [LARGE SCALE MRNA]</scope>
    <scope>VARIANTS LEU-163 AND PHE-282</scope>
</reference>
<reference key="3">
    <citation type="journal article" date="2002" name="Genomics">
        <title>DEFOG: a practical scheme for deciphering families of genes.</title>
        <authorList>
            <person name="Fuchs T."/>
            <person name="Malecova B."/>
            <person name="Linhart C."/>
            <person name="Sharan R."/>
            <person name="Khen M."/>
            <person name="Herwig R."/>
            <person name="Shmulevich D."/>
            <person name="Elkon R."/>
            <person name="Steinfath M."/>
            <person name="O'Brien J.K."/>
            <person name="Radelof U."/>
            <person name="Lehrach H."/>
            <person name="Lancet D."/>
            <person name="Shamir R."/>
        </authorList>
    </citation>
    <scope>NUCLEOTIDE SEQUENCE [GENOMIC DNA] OF 68-283</scope>
</reference>
<keyword id="KW-1003">Cell membrane</keyword>
<keyword id="KW-0297">G-protein coupled receptor</keyword>
<keyword id="KW-0472">Membrane</keyword>
<keyword id="KW-0552">Olfaction</keyword>
<keyword id="KW-0675">Receptor</keyword>
<keyword id="KW-1185">Reference proteome</keyword>
<keyword id="KW-0716">Sensory transduction</keyword>
<keyword id="KW-0807">Transducer</keyword>
<keyword id="KW-0812">Transmembrane</keyword>
<keyword id="KW-1133">Transmembrane helix</keyword>
<comment type="function">
    <text evidence="4">Odorant receptor.</text>
</comment>
<comment type="subcellular location">
    <subcellularLocation>
        <location>Cell membrane</location>
        <topology>Multi-pass membrane protein</topology>
    </subcellularLocation>
</comment>
<comment type="similarity">
    <text evidence="2">Belongs to the G-protein coupled receptor 1 family.</text>
</comment>
<comment type="online information" name="Human Olfactory Receptor Data Exploratorium (HORDE)">
    <link uri="http://genome.weizmann.ac.il/horde/card/index/symbol:OR1I1"/>
</comment>
<name>OR1I1_HUMAN</name>
<proteinExistence type="evidence at transcript level"/>
<sequence>MEPEKQTEISEFFLQGLSEKPEHQTLLFTMFLSTYLVTIIGNALIILAIITDSHLHTPMYFFLFNLSLVDTLLSSTTVPKMLANIQAQSRAIPFVGCLTQMYAFHLFGTMDSFLLAVMAIDRFVAIVHPQRYLVLMCSPVCGLLLGASWMITNLQSLIHTCLMAQLTFCAGSEISHFFCDLMPLLKLSGSDTHTNELVIFAFGIVVGTSPFSCILLSYIRIFWTVFKIPSTRGKWKAFSTCGLHLTVVSLSYGTIFAVYLQPTSPSSSQKDKAAALMCGVFIPMLNPFIYSIRNKDMKAALGKLIGKVAVPCPRPEQLLDVYHVPGSLLAARDTEMHPIPYPGGVQSLAGNRDME</sequence>
<protein>
    <recommendedName>
        <fullName>Olfactory receptor 1I1</fullName>
    </recommendedName>
    <alternativeName>
        <fullName>Olfactory receptor 19-20</fullName>
        <shortName>OR19-20</shortName>
    </alternativeName>
</protein>
<dbReference type="EMBL" id="AC004794">
    <property type="protein sequence ID" value="AAC18915.1"/>
    <property type="molecule type" value="Genomic_DNA"/>
</dbReference>
<dbReference type="EMBL" id="BC140930">
    <property type="protein sequence ID" value="AAI40931.1"/>
    <property type="molecule type" value="mRNA"/>
</dbReference>
<dbReference type="EMBL" id="AF399548">
    <property type="protein sequence ID" value="AAK95033.1"/>
    <property type="molecule type" value="Genomic_DNA"/>
</dbReference>
<dbReference type="CCDS" id="CCDS32937.1"/>
<dbReference type="RefSeq" id="NP_001004713.1">
    <property type="nucleotide sequence ID" value="NM_001004713.2"/>
</dbReference>
<dbReference type="SMR" id="O60431"/>
<dbReference type="BioGRID" id="125984">
    <property type="interactions" value="1"/>
</dbReference>
<dbReference type="FunCoup" id="O60431">
    <property type="interactions" value="456"/>
</dbReference>
<dbReference type="STRING" id="9606.ENSP00000493393"/>
<dbReference type="iPTMnet" id="O60431"/>
<dbReference type="PhosphoSitePlus" id="O60431"/>
<dbReference type="BioMuta" id="OR1I1"/>
<dbReference type="MassIVE" id="O60431"/>
<dbReference type="PaxDb" id="9606-ENSP00000209540"/>
<dbReference type="ProteomicsDB" id="49401"/>
<dbReference type="Antibodypedia" id="26948">
    <property type="antibodies" value="87 antibodies from 19 providers"/>
</dbReference>
<dbReference type="DNASU" id="126370"/>
<dbReference type="Ensembl" id="ENST00000209540.2">
    <property type="protein sequence ID" value="ENSP00000209540.2"/>
    <property type="gene ID" value="ENSG00000094661.3"/>
</dbReference>
<dbReference type="Ensembl" id="ENST00000641398.1">
    <property type="protein sequence ID" value="ENSP00000493393.1"/>
    <property type="gene ID" value="ENSG00000094661.3"/>
</dbReference>
<dbReference type="GeneID" id="126370"/>
<dbReference type="KEGG" id="hsa:126370"/>
<dbReference type="MANE-Select" id="ENST00000641398.1">
    <property type="protein sequence ID" value="ENSP00000493393.1"/>
    <property type="RefSeq nucleotide sequence ID" value="NM_001004713.2"/>
    <property type="RefSeq protein sequence ID" value="NP_001004713.1"/>
</dbReference>
<dbReference type="UCSC" id="uc010xoe.3">
    <property type="organism name" value="human"/>
</dbReference>
<dbReference type="AGR" id="HGNC:8207"/>
<dbReference type="CTD" id="126370"/>
<dbReference type="GeneCards" id="OR1I1"/>
<dbReference type="HGNC" id="HGNC:8207">
    <property type="gene designation" value="OR1I1"/>
</dbReference>
<dbReference type="HPA" id="ENSG00000094661">
    <property type="expression patterns" value="Not detected"/>
</dbReference>
<dbReference type="neXtProt" id="NX_O60431"/>
<dbReference type="PharmGKB" id="PA32078"/>
<dbReference type="VEuPathDB" id="HostDB:ENSG00000094661"/>
<dbReference type="eggNOG" id="ENOG502TM5B">
    <property type="taxonomic scope" value="Eukaryota"/>
</dbReference>
<dbReference type="GeneTree" id="ENSGT00940000162852"/>
<dbReference type="HOGENOM" id="CLU_012526_5_5_1"/>
<dbReference type="InParanoid" id="O60431"/>
<dbReference type="OMA" id="KAATLMC"/>
<dbReference type="OrthoDB" id="5967898at2759"/>
<dbReference type="PAN-GO" id="O60431">
    <property type="GO annotations" value="3 GO annotations based on evolutionary models"/>
</dbReference>
<dbReference type="PhylomeDB" id="O60431"/>
<dbReference type="TreeFam" id="TF337210"/>
<dbReference type="PathwayCommons" id="O60431"/>
<dbReference type="Reactome" id="R-HSA-9752946">
    <property type="pathway name" value="Expression and translocation of olfactory receptors"/>
</dbReference>
<dbReference type="BioGRID-ORCS" id="126370">
    <property type="hits" value="10 hits in 740 CRISPR screens"/>
</dbReference>
<dbReference type="GeneWiki" id="OR1I1"/>
<dbReference type="GenomeRNAi" id="126370"/>
<dbReference type="Pharos" id="O60431">
    <property type="development level" value="Tdark"/>
</dbReference>
<dbReference type="PRO" id="PR:O60431"/>
<dbReference type="Proteomes" id="UP000005640">
    <property type="component" value="Chromosome 19"/>
</dbReference>
<dbReference type="RNAct" id="O60431">
    <property type="molecule type" value="protein"/>
</dbReference>
<dbReference type="Bgee" id="ENSG00000094661">
    <property type="expression patterns" value="Expressed in tibialis anterior and 10 other cell types or tissues"/>
</dbReference>
<dbReference type="GO" id="GO:0005886">
    <property type="term" value="C:plasma membrane"/>
    <property type="evidence" value="ECO:0000318"/>
    <property type="project" value="GO_Central"/>
</dbReference>
<dbReference type="GO" id="GO:0004930">
    <property type="term" value="F:G protein-coupled receptor activity"/>
    <property type="evidence" value="ECO:0007669"/>
    <property type="project" value="UniProtKB-KW"/>
</dbReference>
<dbReference type="GO" id="GO:0004984">
    <property type="term" value="F:olfactory receptor activity"/>
    <property type="evidence" value="ECO:0000318"/>
    <property type="project" value="GO_Central"/>
</dbReference>
<dbReference type="GO" id="GO:0007165">
    <property type="term" value="P:signal transduction"/>
    <property type="evidence" value="ECO:0000318"/>
    <property type="project" value="GO_Central"/>
</dbReference>
<dbReference type="CDD" id="cd15918">
    <property type="entry name" value="7tmA_OR1_7-like"/>
    <property type="match status" value="1"/>
</dbReference>
<dbReference type="FunFam" id="1.20.1070.10:FF:000009">
    <property type="entry name" value="Olfactory receptor"/>
    <property type="match status" value="1"/>
</dbReference>
<dbReference type="Gene3D" id="1.20.1070.10">
    <property type="entry name" value="Rhodopsin 7-helix transmembrane proteins"/>
    <property type="match status" value="1"/>
</dbReference>
<dbReference type="InterPro" id="IPR000276">
    <property type="entry name" value="GPCR_Rhodpsn"/>
</dbReference>
<dbReference type="InterPro" id="IPR017452">
    <property type="entry name" value="GPCR_Rhodpsn_7TM"/>
</dbReference>
<dbReference type="InterPro" id="IPR000725">
    <property type="entry name" value="Olfact_rcpt"/>
</dbReference>
<dbReference type="PANTHER" id="PTHR48001">
    <property type="entry name" value="OLFACTORY RECEPTOR"/>
    <property type="match status" value="1"/>
</dbReference>
<dbReference type="Pfam" id="PF13853">
    <property type="entry name" value="7tm_4"/>
    <property type="match status" value="1"/>
</dbReference>
<dbReference type="PRINTS" id="PR00237">
    <property type="entry name" value="GPCRRHODOPSN"/>
</dbReference>
<dbReference type="PRINTS" id="PR00245">
    <property type="entry name" value="OLFACTORYR"/>
</dbReference>
<dbReference type="SUPFAM" id="SSF81321">
    <property type="entry name" value="Family A G protein-coupled receptor-like"/>
    <property type="match status" value="1"/>
</dbReference>
<dbReference type="PROSITE" id="PS00237">
    <property type="entry name" value="G_PROTEIN_RECEP_F1_1"/>
    <property type="match status" value="1"/>
</dbReference>
<dbReference type="PROSITE" id="PS50262">
    <property type="entry name" value="G_PROTEIN_RECEP_F1_2"/>
    <property type="match status" value="1"/>
</dbReference>
<evidence type="ECO:0000255" key="1"/>
<evidence type="ECO:0000255" key="2">
    <source>
        <dbReference type="PROSITE-ProRule" id="PRU00521"/>
    </source>
</evidence>
<evidence type="ECO:0000269" key="3">
    <source>
    </source>
</evidence>
<evidence type="ECO:0000305" key="4"/>